<keyword id="KW-0067">ATP-binding</keyword>
<keyword id="KW-0963">Cytoplasm</keyword>
<keyword id="KW-0235">DNA replication</keyword>
<keyword id="KW-0238">DNA-binding</keyword>
<keyword id="KW-0446">Lipid-binding</keyword>
<keyword id="KW-0547">Nucleotide-binding</keyword>
<accession>B3QJZ9</accession>
<gene>
    <name evidence="1" type="primary">dnaA</name>
    <name type="ordered locus">Rpal_0001</name>
</gene>
<protein>
    <recommendedName>
        <fullName evidence="1">Chromosomal replication initiator protein DnaA</fullName>
    </recommendedName>
</protein>
<sequence length="472" mass="52566">MSNMEQDRWSRVKGRLRSSVGEDVYSSWFARMDLESVHDESVHLSVPTRFLKSWIQTHYSDKVLSCWQAELPEVNRVDLTVRSPVRCAAPAKEAPAPVESRRDEQRPSAERSNGATPVSANHDALGGSPLDPRLTFASFVVGRSNTLAHAAAKQVAEGRRGDPVMFNPLYIHSGVGLGKTHLLQAVTWAGNAGTERKVLYLTAEKFMYGFVAALKTQTSLAFKEALRGIDVLVIDDLQFLQGKTTQAEFCHTLNALIDAGRQVVVAADRPPADLESLDERVRSRLAGGLVVEMAPLGEDLRLGILRSRVVAARTHHASFDVPQPVLEYLARTITHNGRDLEGAINRLLAHSKLNNQPVTLEMAEHEVRDLIRPSEPKRIKIEDIQRIVARQYNVSRSDLLSSRRTANVVRPRQVAMYLAKTLTLRSLPEIGRRFGGRDHTTVLHAVRKIEGLVSKDTTLSDEVESLKRQLQE</sequence>
<organism>
    <name type="scientific">Rhodopseudomonas palustris (strain TIE-1)</name>
    <dbReference type="NCBI Taxonomy" id="395960"/>
    <lineage>
        <taxon>Bacteria</taxon>
        <taxon>Pseudomonadati</taxon>
        <taxon>Pseudomonadota</taxon>
        <taxon>Alphaproteobacteria</taxon>
        <taxon>Hyphomicrobiales</taxon>
        <taxon>Nitrobacteraceae</taxon>
        <taxon>Rhodopseudomonas</taxon>
    </lineage>
</organism>
<reference key="1">
    <citation type="submission" date="2008-05" db="EMBL/GenBank/DDBJ databases">
        <title>Complete sequence of Rhodopseudomonas palustris TIE-1.</title>
        <authorList>
            <consortium name="US DOE Joint Genome Institute"/>
            <person name="Lucas S."/>
            <person name="Copeland A."/>
            <person name="Lapidus A."/>
            <person name="Glavina del Rio T."/>
            <person name="Dalin E."/>
            <person name="Tice H."/>
            <person name="Pitluck S."/>
            <person name="Chain P."/>
            <person name="Malfatti S."/>
            <person name="Shin M."/>
            <person name="Vergez L."/>
            <person name="Lang D."/>
            <person name="Schmutz J."/>
            <person name="Larimer F."/>
            <person name="Land M."/>
            <person name="Hauser L."/>
            <person name="Kyrpides N."/>
            <person name="Mikhailova N."/>
            <person name="Emerson D."/>
            <person name="Newman D.K."/>
            <person name="Roden E."/>
            <person name="Richardson P."/>
        </authorList>
    </citation>
    <scope>NUCLEOTIDE SEQUENCE [LARGE SCALE GENOMIC DNA]</scope>
    <source>
        <strain>TIE-1</strain>
    </source>
</reference>
<dbReference type="EMBL" id="CP001096">
    <property type="protein sequence ID" value="ACE98563.1"/>
    <property type="molecule type" value="Genomic_DNA"/>
</dbReference>
<dbReference type="RefSeq" id="WP_012493852.1">
    <property type="nucleotide sequence ID" value="NC_011004.1"/>
</dbReference>
<dbReference type="SMR" id="B3QJZ9"/>
<dbReference type="KEGG" id="rpt:Rpal_0001"/>
<dbReference type="HOGENOM" id="CLU_026910_3_0_5"/>
<dbReference type="OrthoDB" id="9807019at2"/>
<dbReference type="Proteomes" id="UP000001725">
    <property type="component" value="Chromosome"/>
</dbReference>
<dbReference type="GO" id="GO:0005737">
    <property type="term" value="C:cytoplasm"/>
    <property type="evidence" value="ECO:0007669"/>
    <property type="project" value="UniProtKB-SubCell"/>
</dbReference>
<dbReference type="GO" id="GO:0005886">
    <property type="term" value="C:plasma membrane"/>
    <property type="evidence" value="ECO:0007669"/>
    <property type="project" value="TreeGrafter"/>
</dbReference>
<dbReference type="GO" id="GO:0005524">
    <property type="term" value="F:ATP binding"/>
    <property type="evidence" value="ECO:0007669"/>
    <property type="project" value="UniProtKB-UniRule"/>
</dbReference>
<dbReference type="GO" id="GO:0016887">
    <property type="term" value="F:ATP hydrolysis activity"/>
    <property type="evidence" value="ECO:0007669"/>
    <property type="project" value="InterPro"/>
</dbReference>
<dbReference type="GO" id="GO:0003688">
    <property type="term" value="F:DNA replication origin binding"/>
    <property type="evidence" value="ECO:0007669"/>
    <property type="project" value="UniProtKB-UniRule"/>
</dbReference>
<dbReference type="GO" id="GO:0008289">
    <property type="term" value="F:lipid binding"/>
    <property type="evidence" value="ECO:0007669"/>
    <property type="project" value="UniProtKB-KW"/>
</dbReference>
<dbReference type="GO" id="GO:0006270">
    <property type="term" value="P:DNA replication initiation"/>
    <property type="evidence" value="ECO:0007669"/>
    <property type="project" value="UniProtKB-UniRule"/>
</dbReference>
<dbReference type="GO" id="GO:0006275">
    <property type="term" value="P:regulation of DNA replication"/>
    <property type="evidence" value="ECO:0007669"/>
    <property type="project" value="UniProtKB-UniRule"/>
</dbReference>
<dbReference type="CDD" id="cd00009">
    <property type="entry name" value="AAA"/>
    <property type="match status" value="1"/>
</dbReference>
<dbReference type="CDD" id="cd06571">
    <property type="entry name" value="Bac_DnaA_C"/>
    <property type="match status" value="1"/>
</dbReference>
<dbReference type="FunFam" id="1.10.1750.10:FF:000002">
    <property type="entry name" value="Chromosomal replication initiator protein DnaA"/>
    <property type="match status" value="1"/>
</dbReference>
<dbReference type="FunFam" id="3.40.50.300:FF:000668">
    <property type="entry name" value="Chromosomal replication initiator protein DnaA"/>
    <property type="match status" value="1"/>
</dbReference>
<dbReference type="Gene3D" id="1.10.1750.10">
    <property type="match status" value="1"/>
</dbReference>
<dbReference type="Gene3D" id="1.10.8.60">
    <property type="match status" value="1"/>
</dbReference>
<dbReference type="Gene3D" id="3.30.300.180">
    <property type="match status" value="1"/>
</dbReference>
<dbReference type="Gene3D" id="3.40.50.300">
    <property type="entry name" value="P-loop containing nucleotide triphosphate hydrolases"/>
    <property type="match status" value="1"/>
</dbReference>
<dbReference type="HAMAP" id="MF_00377">
    <property type="entry name" value="DnaA_bact"/>
    <property type="match status" value="1"/>
</dbReference>
<dbReference type="InterPro" id="IPR003593">
    <property type="entry name" value="AAA+_ATPase"/>
</dbReference>
<dbReference type="InterPro" id="IPR001957">
    <property type="entry name" value="Chromosome_initiator_DnaA"/>
</dbReference>
<dbReference type="InterPro" id="IPR020591">
    <property type="entry name" value="Chromosome_initiator_DnaA-like"/>
</dbReference>
<dbReference type="InterPro" id="IPR018312">
    <property type="entry name" value="Chromosome_initiator_DnaA_CS"/>
</dbReference>
<dbReference type="InterPro" id="IPR013159">
    <property type="entry name" value="DnaA_C"/>
</dbReference>
<dbReference type="InterPro" id="IPR013317">
    <property type="entry name" value="DnaA_dom"/>
</dbReference>
<dbReference type="InterPro" id="IPR024633">
    <property type="entry name" value="DnaA_N_dom"/>
</dbReference>
<dbReference type="InterPro" id="IPR038454">
    <property type="entry name" value="DnaA_N_sf"/>
</dbReference>
<dbReference type="InterPro" id="IPR027417">
    <property type="entry name" value="P-loop_NTPase"/>
</dbReference>
<dbReference type="InterPro" id="IPR010921">
    <property type="entry name" value="Trp_repressor/repl_initiator"/>
</dbReference>
<dbReference type="NCBIfam" id="TIGR00362">
    <property type="entry name" value="DnaA"/>
    <property type="match status" value="1"/>
</dbReference>
<dbReference type="PANTHER" id="PTHR30050">
    <property type="entry name" value="CHROMOSOMAL REPLICATION INITIATOR PROTEIN DNAA"/>
    <property type="match status" value="1"/>
</dbReference>
<dbReference type="PANTHER" id="PTHR30050:SF2">
    <property type="entry name" value="CHROMOSOMAL REPLICATION INITIATOR PROTEIN DNAA"/>
    <property type="match status" value="1"/>
</dbReference>
<dbReference type="Pfam" id="PF00308">
    <property type="entry name" value="Bac_DnaA"/>
    <property type="match status" value="1"/>
</dbReference>
<dbReference type="Pfam" id="PF08299">
    <property type="entry name" value="Bac_DnaA_C"/>
    <property type="match status" value="1"/>
</dbReference>
<dbReference type="Pfam" id="PF11638">
    <property type="entry name" value="DnaA_N"/>
    <property type="match status" value="1"/>
</dbReference>
<dbReference type="PRINTS" id="PR00051">
    <property type="entry name" value="DNAA"/>
</dbReference>
<dbReference type="SMART" id="SM00382">
    <property type="entry name" value="AAA"/>
    <property type="match status" value="1"/>
</dbReference>
<dbReference type="SMART" id="SM00760">
    <property type="entry name" value="Bac_DnaA_C"/>
    <property type="match status" value="1"/>
</dbReference>
<dbReference type="SUPFAM" id="SSF52540">
    <property type="entry name" value="P-loop containing nucleoside triphosphate hydrolases"/>
    <property type="match status" value="1"/>
</dbReference>
<dbReference type="SUPFAM" id="SSF48295">
    <property type="entry name" value="TrpR-like"/>
    <property type="match status" value="1"/>
</dbReference>
<dbReference type="PROSITE" id="PS01008">
    <property type="entry name" value="DNAA"/>
    <property type="match status" value="1"/>
</dbReference>
<comment type="function">
    <text evidence="1">Plays an essential role in the initiation and regulation of chromosomal replication. ATP-DnaA binds to the origin of replication (oriC) to initiate formation of the DNA replication initiation complex once per cell cycle. Binds the DnaA box (a 9 base pair repeat at the origin) and separates the double-stranded (ds)DNA. Forms a right-handed helical filament on oriC DNA; dsDNA binds to the exterior of the filament while single-stranded (ss)DNA is stabiized in the filament's interior. The ATP-DnaA-oriC complex binds and stabilizes one strand of the AT-rich DNA unwinding element (DUE), permitting loading of DNA polymerase. After initiation quickly degrades to an ADP-DnaA complex that is not apt for DNA replication. Binds acidic phospholipids.</text>
</comment>
<comment type="subunit">
    <text evidence="1">Oligomerizes as a right-handed, spiral filament on DNA at oriC.</text>
</comment>
<comment type="subcellular location">
    <subcellularLocation>
        <location evidence="1">Cytoplasm</location>
    </subcellularLocation>
</comment>
<comment type="domain">
    <text evidence="1">Domain I is involved in oligomerization and binding regulators, domain II is flexibile and of varying length in different bacteria, domain III forms the AAA+ region, while domain IV binds dsDNA.</text>
</comment>
<comment type="similarity">
    <text evidence="1">Belongs to the DnaA family.</text>
</comment>
<name>DNAA_RHOPT</name>
<feature type="chain" id="PRO_1000122007" description="Chromosomal replication initiator protein DnaA">
    <location>
        <begin position="1"/>
        <end position="472"/>
    </location>
</feature>
<feature type="region of interest" description="Domain I, interacts with DnaA modulators" evidence="1">
    <location>
        <begin position="1"/>
        <end position="73"/>
    </location>
</feature>
<feature type="region of interest" description="Domain II" evidence="1">
    <location>
        <begin position="73"/>
        <end position="128"/>
    </location>
</feature>
<feature type="region of interest" description="Disordered" evidence="2">
    <location>
        <begin position="89"/>
        <end position="124"/>
    </location>
</feature>
<feature type="region of interest" description="Domain III, AAA+ region" evidence="1">
    <location>
        <begin position="129"/>
        <end position="351"/>
    </location>
</feature>
<feature type="region of interest" description="Domain IV, binds dsDNA" evidence="1">
    <location>
        <begin position="352"/>
        <end position="472"/>
    </location>
</feature>
<feature type="compositionally biased region" description="Basic and acidic residues" evidence="2">
    <location>
        <begin position="99"/>
        <end position="109"/>
    </location>
</feature>
<feature type="compositionally biased region" description="Polar residues" evidence="2">
    <location>
        <begin position="110"/>
        <end position="119"/>
    </location>
</feature>
<feature type="binding site" evidence="1">
    <location>
        <position position="176"/>
    </location>
    <ligand>
        <name>ATP</name>
        <dbReference type="ChEBI" id="CHEBI:30616"/>
    </ligand>
</feature>
<feature type="binding site" evidence="1">
    <location>
        <position position="178"/>
    </location>
    <ligand>
        <name>ATP</name>
        <dbReference type="ChEBI" id="CHEBI:30616"/>
    </ligand>
</feature>
<feature type="binding site" evidence="1">
    <location>
        <position position="179"/>
    </location>
    <ligand>
        <name>ATP</name>
        <dbReference type="ChEBI" id="CHEBI:30616"/>
    </ligand>
</feature>
<feature type="binding site" evidence="1">
    <location>
        <position position="180"/>
    </location>
    <ligand>
        <name>ATP</name>
        <dbReference type="ChEBI" id="CHEBI:30616"/>
    </ligand>
</feature>
<evidence type="ECO:0000255" key="1">
    <source>
        <dbReference type="HAMAP-Rule" id="MF_00377"/>
    </source>
</evidence>
<evidence type="ECO:0000256" key="2">
    <source>
        <dbReference type="SAM" id="MobiDB-lite"/>
    </source>
</evidence>
<proteinExistence type="inferred from homology"/>